<protein>
    <recommendedName>
        <fullName evidence="1">Photosystem II reaction center protein Y</fullName>
    </recommendedName>
</protein>
<accession>A5GU84</accession>
<name>PSBY_SYNR3</name>
<reference key="1">
    <citation type="submission" date="2006-05" db="EMBL/GenBank/DDBJ databases">
        <authorList>
            <consortium name="Genoscope"/>
        </authorList>
    </citation>
    <scope>NUCLEOTIDE SEQUENCE [LARGE SCALE GENOMIC DNA]</scope>
    <source>
        <strain>RCC307</strain>
    </source>
</reference>
<dbReference type="EMBL" id="CT978603">
    <property type="protein sequence ID" value="CAK28443.1"/>
    <property type="molecule type" value="Genomic_DNA"/>
</dbReference>
<dbReference type="SMR" id="A5GU84"/>
<dbReference type="STRING" id="316278.SynRCC307_1540"/>
<dbReference type="KEGG" id="syr:SynRCC307_1540"/>
<dbReference type="eggNOG" id="ENOG502ZJ2H">
    <property type="taxonomic scope" value="Bacteria"/>
</dbReference>
<dbReference type="HOGENOM" id="CLU_218393_1_0_3"/>
<dbReference type="OrthoDB" id="561045at2"/>
<dbReference type="Proteomes" id="UP000001115">
    <property type="component" value="Chromosome"/>
</dbReference>
<dbReference type="GO" id="GO:0009523">
    <property type="term" value="C:photosystem II"/>
    <property type="evidence" value="ECO:0007669"/>
    <property type="project" value="UniProtKB-KW"/>
</dbReference>
<dbReference type="GO" id="GO:0031676">
    <property type="term" value="C:plasma membrane-derived thylakoid membrane"/>
    <property type="evidence" value="ECO:0007669"/>
    <property type="project" value="UniProtKB-SubCell"/>
</dbReference>
<dbReference type="GO" id="GO:0030145">
    <property type="term" value="F:manganese ion binding"/>
    <property type="evidence" value="ECO:0007669"/>
    <property type="project" value="InterPro"/>
</dbReference>
<dbReference type="GO" id="GO:0015979">
    <property type="term" value="P:photosynthesis"/>
    <property type="evidence" value="ECO:0007669"/>
    <property type="project" value="UniProtKB-UniRule"/>
</dbReference>
<dbReference type="HAMAP" id="MF_00717">
    <property type="entry name" value="PSII_PsbY"/>
    <property type="match status" value="1"/>
</dbReference>
<dbReference type="InterPro" id="IPR009388">
    <property type="entry name" value="PSII_PsbY"/>
</dbReference>
<dbReference type="NCBIfam" id="NF009711">
    <property type="entry name" value="PRK13240.1"/>
    <property type="match status" value="1"/>
</dbReference>
<dbReference type="Pfam" id="PF06298">
    <property type="entry name" value="PsbY"/>
    <property type="match status" value="1"/>
</dbReference>
<organism>
    <name type="scientific">Synechococcus sp. (strain RCC307)</name>
    <dbReference type="NCBI Taxonomy" id="316278"/>
    <lineage>
        <taxon>Bacteria</taxon>
        <taxon>Bacillati</taxon>
        <taxon>Cyanobacteriota</taxon>
        <taxon>Cyanophyceae</taxon>
        <taxon>Synechococcales</taxon>
        <taxon>Synechococcaceae</taxon>
        <taxon>Synechococcus</taxon>
    </lineage>
</organism>
<keyword id="KW-0472">Membrane</keyword>
<keyword id="KW-0602">Photosynthesis</keyword>
<keyword id="KW-0604">Photosystem II</keyword>
<keyword id="KW-1185">Reference proteome</keyword>
<keyword id="KW-0793">Thylakoid</keyword>
<keyword id="KW-0812">Transmembrane</keyword>
<keyword id="KW-1133">Transmembrane helix</keyword>
<evidence type="ECO:0000255" key="1">
    <source>
        <dbReference type="HAMAP-Rule" id="MF_00717"/>
    </source>
</evidence>
<comment type="function">
    <text evidence="1">Loosely associated component of the core of photosystem II (PSII), it is not always seen in crystals. PSII is a light-driven water plastoquinone oxidoreductase, using light energy to abstract electrons from H(2)O, generating a proton gradient subsequently used for ATP formation.</text>
</comment>
<comment type="subunit">
    <text evidence="1">PSII is composed of 1 copy each of membrane proteins PsbA, PsbB, PsbC, PsbD, PsbE, PsbF, PsbH, PsbI, PsbJ, PsbK, PsbL, PsbM, PsbT, PsbX, PsbY, PsbZ, Psb30/Ycf12, peripheral proteins PsbO, CyanoQ (PsbQ), PsbU, PsbV and a large number of cofactors. It forms dimeric complexes.</text>
</comment>
<comment type="subcellular location">
    <subcellularLocation>
        <location evidence="1">Cellular thylakoid membrane</location>
        <topology evidence="1">Single-pass membrane protein</topology>
    </subcellularLocation>
</comment>
<comment type="similarity">
    <text evidence="1">Belongs to the PsbY family.</text>
</comment>
<proteinExistence type="inferred from homology"/>
<gene>
    <name evidence="1" type="primary">psbY</name>
    <name type="ordered locus">SynRCC307_1540</name>
</gene>
<feature type="chain" id="PRO_1000083252" description="Photosystem II reaction center protein Y">
    <location>
        <begin position="1"/>
        <end position="40"/>
    </location>
</feature>
<feature type="transmembrane region" description="Helical" evidence="1">
    <location>
        <begin position="5"/>
        <end position="23"/>
    </location>
</feature>
<sequence length="40" mass="4276">MDLRLVLVASPILLAVGWAGFNIGRAAVGQLQLMLKRARG</sequence>